<name>RIBB_ECOUT</name>
<keyword id="KW-0456">Lyase</keyword>
<keyword id="KW-0460">Magnesium</keyword>
<keyword id="KW-0464">Manganese</keyword>
<keyword id="KW-0479">Metal-binding</keyword>
<keyword id="KW-0686">Riboflavin biosynthesis</keyword>
<reference key="1">
    <citation type="journal article" date="2006" name="Proc. Natl. Acad. Sci. U.S.A.">
        <title>Identification of genes subject to positive selection in uropathogenic strains of Escherichia coli: a comparative genomics approach.</title>
        <authorList>
            <person name="Chen S.L."/>
            <person name="Hung C.-S."/>
            <person name="Xu J."/>
            <person name="Reigstad C.S."/>
            <person name="Magrini V."/>
            <person name="Sabo A."/>
            <person name="Blasiar D."/>
            <person name="Bieri T."/>
            <person name="Meyer R.R."/>
            <person name="Ozersky P."/>
            <person name="Armstrong J.R."/>
            <person name="Fulton R.S."/>
            <person name="Latreille J.P."/>
            <person name="Spieth J."/>
            <person name="Hooton T.M."/>
            <person name="Mardis E.R."/>
            <person name="Hultgren S.J."/>
            <person name="Gordon J.I."/>
        </authorList>
    </citation>
    <scope>NUCLEOTIDE SEQUENCE [LARGE SCALE GENOMIC DNA]</scope>
    <source>
        <strain>UTI89 / UPEC</strain>
    </source>
</reference>
<gene>
    <name evidence="1" type="primary">ribB</name>
    <name type="ordered locus">UTI89_C3483</name>
</gene>
<proteinExistence type="inferred from homology"/>
<comment type="function">
    <text evidence="1">Catalyzes the conversion of D-ribulose 5-phosphate to formate and 3,4-dihydroxy-2-butanone 4-phosphate.</text>
</comment>
<comment type="catalytic activity">
    <reaction evidence="1">
        <text>D-ribulose 5-phosphate = (2S)-2-hydroxy-3-oxobutyl phosphate + formate + H(+)</text>
        <dbReference type="Rhea" id="RHEA:18457"/>
        <dbReference type="ChEBI" id="CHEBI:15378"/>
        <dbReference type="ChEBI" id="CHEBI:15740"/>
        <dbReference type="ChEBI" id="CHEBI:58121"/>
        <dbReference type="ChEBI" id="CHEBI:58830"/>
        <dbReference type="EC" id="4.1.99.12"/>
    </reaction>
</comment>
<comment type="cofactor">
    <cofactor evidence="1">
        <name>Mg(2+)</name>
        <dbReference type="ChEBI" id="CHEBI:18420"/>
    </cofactor>
    <cofactor evidence="1">
        <name>Mn(2+)</name>
        <dbReference type="ChEBI" id="CHEBI:29035"/>
    </cofactor>
    <text evidence="1">Binds 2 divalent metal cations per subunit. Magnesium or manganese.</text>
</comment>
<comment type="pathway">
    <text evidence="1">Cofactor biosynthesis; riboflavin biosynthesis; 2-hydroxy-3-oxobutyl phosphate from D-ribulose 5-phosphate: step 1/1.</text>
</comment>
<comment type="subunit">
    <text evidence="1">Homodimer.</text>
</comment>
<comment type="similarity">
    <text evidence="1">Belongs to the DHBP synthase family.</text>
</comment>
<evidence type="ECO:0000255" key="1">
    <source>
        <dbReference type="HAMAP-Rule" id="MF_00180"/>
    </source>
</evidence>
<dbReference type="EC" id="4.1.99.12" evidence="1"/>
<dbReference type="EMBL" id="CP000243">
    <property type="protein sequence ID" value="ABE08930.1"/>
    <property type="molecule type" value="Genomic_DNA"/>
</dbReference>
<dbReference type="RefSeq" id="WP_001076989.1">
    <property type="nucleotide sequence ID" value="NZ_CP064825.1"/>
</dbReference>
<dbReference type="SMR" id="Q1R6T4"/>
<dbReference type="KEGG" id="eci:UTI89_C3483"/>
<dbReference type="HOGENOM" id="CLU_020273_3_0_6"/>
<dbReference type="UniPathway" id="UPA00275">
    <property type="reaction ID" value="UER00399"/>
</dbReference>
<dbReference type="Proteomes" id="UP000001952">
    <property type="component" value="Chromosome"/>
</dbReference>
<dbReference type="GO" id="GO:0005829">
    <property type="term" value="C:cytosol"/>
    <property type="evidence" value="ECO:0007669"/>
    <property type="project" value="TreeGrafter"/>
</dbReference>
<dbReference type="GO" id="GO:0008686">
    <property type="term" value="F:3,4-dihydroxy-2-butanone-4-phosphate synthase activity"/>
    <property type="evidence" value="ECO:0007669"/>
    <property type="project" value="UniProtKB-UniRule"/>
</dbReference>
<dbReference type="GO" id="GO:0000287">
    <property type="term" value="F:magnesium ion binding"/>
    <property type="evidence" value="ECO:0007669"/>
    <property type="project" value="UniProtKB-UniRule"/>
</dbReference>
<dbReference type="GO" id="GO:0030145">
    <property type="term" value="F:manganese ion binding"/>
    <property type="evidence" value="ECO:0007669"/>
    <property type="project" value="UniProtKB-UniRule"/>
</dbReference>
<dbReference type="GO" id="GO:0009231">
    <property type="term" value="P:riboflavin biosynthetic process"/>
    <property type="evidence" value="ECO:0007669"/>
    <property type="project" value="UniProtKB-UniRule"/>
</dbReference>
<dbReference type="FunFam" id="3.90.870.10:FF:000002">
    <property type="entry name" value="3,4-dihydroxy-2-butanone 4-phosphate synthase"/>
    <property type="match status" value="1"/>
</dbReference>
<dbReference type="Gene3D" id="3.90.870.10">
    <property type="entry name" value="DHBP synthase"/>
    <property type="match status" value="1"/>
</dbReference>
<dbReference type="HAMAP" id="MF_00180">
    <property type="entry name" value="RibB"/>
    <property type="match status" value="1"/>
</dbReference>
<dbReference type="InterPro" id="IPR017945">
    <property type="entry name" value="DHBP_synth_RibB-like_a/b_dom"/>
</dbReference>
<dbReference type="InterPro" id="IPR000422">
    <property type="entry name" value="DHBP_synthase_RibB"/>
</dbReference>
<dbReference type="NCBIfam" id="TIGR00506">
    <property type="entry name" value="ribB"/>
    <property type="match status" value="1"/>
</dbReference>
<dbReference type="PANTHER" id="PTHR21327:SF38">
    <property type="entry name" value="3,4-DIHYDROXY-2-BUTANONE 4-PHOSPHATE SYNTHASE"/>
    <property type="match status" value="1"/>
</dbReference>
<dbReference type="PANTHER" id="PTHR21327">
    <property type="entry name" value="GTP CYCLOHYDROLASE II-RELATED"/>
    <property type="match status" value="1"/>
</dbReference>
<dbReference type="Pfam" id="PF00926">
    <property type="entry name" value="DHBP_synthase"/>
    <property type="match status" value="1"/>
</dbReference>
<dbReference type="SUPFAM" id="SSF55821">
    <property type="entry name" value="YrdC/RibB"/>
    <property type="match status" value="1"/>
</dbReference>
<organism>
    <name type="scientific">Escherichia coli (strain UTI89 / UPEC)</name>
    <dbReference type="NCBI Taxonomy" id="364106"/>
    <lineage>
        <taxon>Bacteria</taxon>
        <taxon>Pseudomonadati</taxon>
        <taxon>Pseudomonadota</taxon>
        <taxon>Gammaproteobacteria</taxon>
        <taxon>Enterobacterales</taxon>
        <taxon>Enterobacteriaceae</taxon>
        <taxon>Escherichia</taxon>
    </lineage>
</organism>
<accession>Q1R6T4</accession>
<sequence length="217" mass="23339">MNQTLLSSFGTPFERVENALAALREGRGVMVLDDEDRENEGDMIFPAETMTVEQMALTIRHGSGIVCLCITDDRRKQLDLPMMVENNTSAYGTGFTVTIEAAEGVTTGVSAADRITTVRAAIADGAKPSDLNRPGHVFPLRAQAGGVLTRGGHTEATIDLMTLAGFKPAGVLCELTNDDGTMARAPECIEFANKHNMALVTIEDLVAYRQAHERKAS</sequence>
<feature type="chain" id="PRO_1000040607" description="3,4-dihydroxy-2-butanone 4-phosphate synthase">
    <location>
        <begin position="1"/>
        <end position="217"/>
    </location>
</feature>
<feature type="binding site" evidence="1">
    <location>
        <begin position="37"/>
        <end position="38"/>
    </location>
    <ligand>
        <name>D-ribulose 5-phosphate</name>
        <dbReference type="ChEBI" id="CHEBI:58121"/>
    </ligand>
</feature>
<feature type="binding site" evidence="1">
    <location>
        <position position="38"/>
    </location>
    <ligand>
        <name>Mg(2+)</name>
        <dbReference type="ChEBI" id="CHEBI:18420"/>
        <label>1</label>
    </ligand>
</feature>
<feature type="binding site" evidence="1">
    <location>
        <position position="38"/>
    </location>
    <ligand>
        <name>Mg(2+)</name>
        <dbReference type="ChEBI" id="CHEBI:18420"/>
        <label>2</label>
    </ligand>
</feature>
<feature type="binding site" evidence="1">
    <location>
        <position position="42"/>
    </location>
    <ligand>
        <name>D-ribulose 5-phosphate</name>
        <dbReference type="ChEBI" id="CHEBI:58121"/>
    </ligand>
</feature>
<feature type="binding site" evidence="1">
    <location>
        <begin position="150"/>
        <end position="154"/>
    </location>
    <ligand>
        <name>D-ribulose 5-phosphate</name>
        <dbReference type="ChEBI" id="CHEBI:58121"/>
    </ligand>
</feature>
<feature type="binding site" evidence="1">
    <location>
        <position position="153"/>
    </location>
    <ligand>
        <name>Mg(2+)</name>
        <dbReference type="ChEBI" id="CHEBI:18420"/>
        <label>2</label>
    </ligand>
</feature>
<feature type="binding site" evidence="1">
    <location>
        <position position="174"/>
    </location>
    <ligand>
        <name>D-ribulose 5-phosphate</name>
        <dbReference type="ChEBI" id="CHEBI:58121"/>
    </ligand>
</feature>
<feature type="site" description="Essential for catalytic activity" evidence="1">
    <location>
        <position position="136"/>
    </location>
</feature>
<feature type="site" description="Essential for catalytic activity" evidence="1">
    <location>
        <position position="174"/>
    </location>
</feature>
<protein>
    <recommendedName>
        <fullName evidence="1">3,4-dihydroxy-2-butanone 4-phosphate synthase</fullName>
        <shortName evidence="1">DHBP synthase</shortName>
        <ecNumber evidence="1">4.1.99.12</ecNumber>
    </recommendedName>
</protein>